<reference key="1">
    <citation type="journal article" date="2023" name="Proc. Natl. Acad. Sci. U.S.A.">
        <title>Horizontal gene transfer underlies the painful stings of asp caterpillars (Lepidoptera: Megalopygidae).</title>
        <authorList>
            <person name="Walker A.A."/>
            <person name="Robinson S.D."/>
            <person name="Merritt D.J."/>
            <person name="Cardoso F.C."/>
            <person name="Goudarzi M.H."/>
            <person name="Mercedes R.S."/>
            <person name="Eagles D.A."/>
            <person name="Cooper P."/>
            <person name="Zdenek C.N."/>
            <person name="Fry B.G."/>
            <person name="Hall D.W."/>
            <person name="Vetter I."/>
            <person name="King G.F."/>
        </authorList>
    </citation>
    <scope>NUCLEOTIDE SEQUENCE [MRNA]</scope>
    <scope>MASS SPECTROMETRY</scope>
    <scope>SYNTHESIS OF 30-40</scope>
    <scope>SUBCELLULAR LOCATION</scope>
    <scope>TISSUE SPECIFICITY</scope>
    <scope>DEVELOPMENTAL STAGE</scope>
    <source>
        <tissue>Venom</tissue>
    </source>
</reference>
<comment type="function">
    <text evidence="4">Probable toxin.</text>
</comment>
<comment type="subcellular location">
    <subcellularLocation>
        <location evidence="2">Secreted</location>
    </subcellularLocation>
</comment>
<comment type="tissue specificity">
    <text evidence="2">Expressed by the venom apparatus.</text>
</comment>
<comment type="developmental stage">
    <text evidence="2">Larvae.</text>
</comment>
<comment type="mass spectrometry">
    <text>Monoisotopic mass.</text>
</comment>
<comment type="similarity">
    <text evidence="4">Belongs to the caterpillar 11 family.</text>
</comment>
<proteinExistence type="evidence at protein level"/>
<organism>
    <name type="scientific">Megalopyge opercularis</name>
    <name type="common">Southern flannel moth</name>
    <name type="synonym">Phalaena opercularis</name>
    <dbReference type="NCBI Taxonomy" id="1113279"/>
    <lineage>
        <taxon>Eukaryota</taxon>
        <taxon>Metazoa</taxon>
        <taxon>Ecdysozoa</taxon>
        <taxon>Arthropoda</taxon>
        <taxon>Hexapoda</taxon>
        <taxon>Insecta</taxon>
        <taxon>Pterygota</taxon>
        <taxon>Neoptera</taxon>
        <taxon>Endopterygota</taxon>
        <taxon>Lepidoptera</taxon>
        <taxon>Glossata</taxon>
        <taxon>Ditrysia</taxon>
        <taxon>Zygaenoidea</taxon>
        <taxon>Megalopygidae</taxon>
        <taxon>Megalopyge</taxon>
    </lineage>
</organism>
<accession>P0DXW9</accession>
<name>TXUB_MEGOP</name>
<keyword id="KW-0964">Secreted</keyword>
<keyword id="KW-0732">Signal</keyword>
<keyword id="KW-0800">Toxin</keyword>
<dbReference type="EMBL" id="OP514877">
    <property type="protein sequence ID" value="WJJ70395.1"/>
    <property type="molecule type" value="mRNA"/>
</dbReference>
<dbReference type="GO" id="GO:0005576">
    <property type="term" value="C:extracellular region"/>
    <property type="evidence" value="ECO:0007669"/>
    <property type="project" value="UniProtKB-SubCell"/>
</dbReference>
<dbReference type="GO" id="GO:0090729">
    <property type="term" value="F:toxin activity"/>
    <property type="evidence" value="ECO:0007669"/>
    <property type="project" value="UniProtKB-KW"/>
</dbReference>
<protein>
    <recommendedName>
        <fullName evidence="3">U-megalopygitoxin(11)-Mo28</fullName>
        <shortName evidence="3">U-MPTX(11)-Mo28</shortName>
        <shortName evidence="6">U-MPTX.11-28</shortName>
    </recommendedName>
</protein>
<feature type="signal peptide" evidence="1">
    <location>
        <begin position="1"/>
        <end position="29"/>
    </location>
</feature>
<feature type="peptide" id="PRO_0000461527" description="U-megalopygitoxin(11)-Mo28" evidence="5">
    <location>
        <begin position="30"/>
        <end position="40"/>
    </location>
</feature>
<sequence>MRTTLLLLIIAITVMVFVSEAYAAPAPEPILKQGTIESLTR</sequence>
<evidence type="ECO:0000255" key="1"/>
<evidence type="ECO:0000269" key="2">
    <source>
    </source>
</evidence>
<evidence type="ECO:0000303" key="3">
    <source>
    </source>
</evidence>
<evidence type="ECO:0000305" key="4"/>
<evidence type="ECO:0000305" key="5">
    <source>
    </source>
</evidence>
<evidence type="ECO:0000312" key="6">
    <source>
        <dbReference type="EMBL" id="WJJ70395.1"/>
    </source>
</evidence>